<comment type="function">
    <text evidence="2">Inhibits the activity of the calcium ATPases ATP2A2/SERCA2 and ATP2A3/SERCA3 by decreasing their apparent affinity for Ca(2+).</text>
</comment>
<comment type="subunit">
    <text evidence="1 2">Homooligomer. Can also form heterooligomers with other sarcoplasmic/endoplasmic reticulum calcium ATPase (SERCA) regulators ERLN, PLN, SLN and STRIT1/DWORF. Monomer. Interacts as a monomer with ATP2A2/SERCA2; the interaction results in inhibition of ATP2A2 Ca(2+) affinity.</text>
</comment>
<comment type="subcellular location">
    <subcellularLocation>
        <location evidence="2">Endoplasmic reticulum membrane</location>
        <topology evidence="3">Single-pass membrane protein</topology>
    </subcellularLocation>
</comment>
<dbReference type="EMBL" id="BC100074">
    <property type="protein sequence ID" value="AAI00075.1"/>
    <property type="molecule type" value="mRNA"/>
</dbReference>
<dbReference type="RefSeq" id="NP_001258045.1">
    <property type="nucleotide sequence ID" value="NM_001271116.1"/>
</dbReference>
<dbReference type="SMR" id="Q498U0"/>
<dbReference type="FunCoup" id="Q498U0">
    <property type="interactions" value="197"/>
</dbReference>
<dbReference type="STRING" id="10116.ENSRNOP00000019647"/>
<dbReference type="iPTMnet" id="Q498U0"/>
<dbReference type="PhosphoSitePlus" id="Q498U0"/>
<dbReference type="PaxDb" id="10116-ENSRNOP00000019647"/>
<dbReference type="Ensembl" id="ENSRNOT00000019647.3">
    <property type="protein sequence ID" value="ENSRNOP00000019647.2"/>
    <property type="gene ID" value="ENSRNOG00000014654.3"/>
</dbReference>
<dbReference type="GeneID" id="691807"/>
<dbReference type="KEGG" id="rno:691807"/>
<dbReference type="UCSC" id="RGD:1594660">
    <property type="organism name" value="rat"/>
</dbReference>
<dbReference type="AGR" id="RGD:1594660"/>
<dbReference type="CTD" id="401152"/>
<dbReference type="RGD" id="1594660">
    <property type="gene designation" value="C2h4orf3"/>
</dbReference>
<dbReference type="eggNOG" id="ENOG502T0GP">
    <property type="taxonomic scope" value="Eukaryota"/>
</dbReference>
<dbReference type="GeneTree" id="ENSGT00530000064570"/>
<dbReference type="HOGENOM" id="CLU_189559_0_0_1"/>
<dbReference type="InParanoid" id="Q498U0"/>
<dbReference type="OMA" id="REERPQC"/>
<dbReference type="TreeFam" id="TF343305"/>
<dbReference type="PRO" id="PR:Q498U0"/>
<dbReference type="Proteomes" id="UP000002494">
    <property type="component" value="Chromosome 2"/>
</dbReference>
<dbReference type="Bgee" id="ENSRNOG00000014654">
    <property type="expression patterns" value="Expressed in stomach and 20 other cell types or tissues"/>
</dbReference>
<dbReference type="GO" id="GO:0005789">
    <property type="term" value="C:endoplasmic reticulum membrane"/>
    <property type="evidence" value="ECO:0000266"/>
    <property type="project" value="RGD"/>
</dbReference>
<dbReference type="InterPro" id="IPR038780">
    <property type="entry name" value="ALN"/>
</dbReference>
<dbReference type="PANTHER" id="PTHR37367">
    <property type="entry name" value="CHROMOSOME 4 OPEN READING FRAME 3"/>
    <property type="match status" value="1"/>
</dbReference>
<dbReference type="PANTHER" id="PTHR37367:SF1">
    <property type="entry name" value="CHROMOSOME 4 OPEN READING FRAME 3"/>
    <property type="match status" value="1"/>
</dbReference>
<dbReference type="Pfam" id="PF17696">
    <property type="entry name" value="ALN"/>
    <property type="match status" value="1"/>
</dbReference>
<feature type="chain" id="PRO_0000325787" description="Sarcoplasmic/endoplasmic reticulum calcium ATPase regulator ARLN">
    <location>
        <begin position="1"/>
        <end position="65"/>
    </location>
</feature>
<feature type="transmembrane region" description="Helical" evidence="3">
    <location>
        <begin position="44"/>
        <end position="64"/>
    </location>
</feature>
<feature type="region of interest" description="Disordered" evidence="4">
    <location>
        <begin position="1"/>
        <end position="38"/>
    </location>
</feature>
<feature type="modified residue" description="N-acetylmethionine" evidence="1">
    <location>
        <position position="1"/>
    </location>
</feature>
<feature type="modified residue" description="Phosphoserine" evidence="2">
    <location>
        <position position="19"/>
    </location>
</feature>
<feature type="modified residue" description="Phosphoserine" evidence="6">
    <location>
        <position position="26"/>
    </location>
</feature>
<accession>Q498U0</accession>
<proteinExistence type="evidence at protein level"/>
<reference key="1">
    <citation type="journal article" date="2004" name="Genome Res.">
        <title>The status, quality, and expansion of the NIH full-length cDNA project: the Mammalian Gene Collection (MGC).</title>
        <authorList>
            <consortium name="The MGC Project Team"/>
        </authorList>
    </citation>
    <scope>NUCLEOTIDE SEQUENCE [LARGE SCALE MRNA]</scope>
    <source>
        <tissue>Spleen</tissue>
    </source>
</reference>
<reference key="2">
    <citation type="journal article" date="2012" name="Nat. Commun.">
        <title>Quantitative maps of protein phosphorylation sites across 14 different rat organs and tissues.</title>
        <authorList>
            <person name="Lundby A."/>
            <person name="Secher A."/>
            <person name="Lage K."/>
            <person name="Nordsborg N.B."/>
            <person name="Dmytriyev A."/>
            <person name="Lundby C."/>
            <person name="Olsen J.V."/>
        </authorList>
    </citation>
    <scope>PHOSPHORYLATION [LARGE SCALE ANALYSIS] AT SER-26</scope>
    <scope>IDENTIFICATION BY MASS SPECTROMETRY [LARGE SCALE ANALYSIS]</scope>
</reference>
<protein>
    <recommendedName>
        <fullName evidence="5">Sarcoplasmic/endoplasmic reticulum calcium ATPase regulator ARLN</fullName>
        <shortName evidence="5">SERCA regulator ARLN</shortName>
    </recommendedName>
    <alternativeName>
        <fullName evidence="1">Allregulin</fullName>
    </alternativeName>
    <alternativeName>
        <fullName evidence="2">Another-regulin</fullName>
        <shortName evidence="2">ALN</shortName>
    </alternativeName>
</protein>
<gene>
    <name type="primary">Arln</name>
</gene>
<organism>
    <name type="scientific">Rattus norvegicus</name>
    <name type="common">Rat</name>
    <dbReference type="NCBI Taxonomy" id="10116"/>
    <lineage>
        <taxon>Eukaryota</taxon>
        <taxon>Metazoa</taxon>
        <taxon>Chordata</taxon>
        <taxon>Craniata</taxon>
        <taxon>Vertebrata</taxon>
        <taxon>Euteleostomi</taxon>
        <taxon>Mammalia</taxon>
        <taxon>Eutheria</taxon>
        <taxon>Euarchontoglires</taxon>
        <taxon>Glires</taxon>
        <taxon>Rodentia</taxon>
        <taxon>Myomorpha</taxon>
        <taxon>Muroidea</taxon>
        <taxon>Muridae</taxon>
        <taxon>Murinae</taxon>
        <taxon>Rattus</taxon>
    </lineage>
</organism>
<evidence type="ECO:0000250" key="1">
    <source>
        <dbReference type="UniProtKB" id="Q8WVX3"/>
    </source>
</evidence>
<evidence type="ECO:0000250" key="2">
    <source>
        <dbReference type="UniProtKB" id="Q99M08"/>
    </source>
</evidence>
<evidence type="ECO:0000255" key="3"/>
<evidence type="ECO:0000256" key="4">
    <source>
        <dbReference type="SAM" id="MobiDB-lite"/>
    </source>
</evidence>
<evidence type="ECO:0000305" key="5"/>
<evidence type="ECO:0007744" key="6">
    <source>
    </source>
</evidence>
<name>SRALN_RAT</name>
<keyword id="KW-0007">Acetylation</keyword>
<keyword id="KW-0256">Endoplasmic reticulum</keyword>
<keyword id="KW-0472">Membrane</keyword>
<keyword id="KW-0597">Phosphoprotein</keyword>
<keyword id="KW-1185">Reference proteome</keyword>
<keyword id="KW-0812">Transmembrane</keyword>
<keyword id="KW-1133">Transmembrane helix</keyword>
<sequence length="65" mass="7370">MEVGQAASGTDGVRERRGSSAARRRSQDEPVQSGMNGIPKHSYWLDLWLFILFDLALFIFVYLLP</sequence>